<gene>
    <name evidence="4" type="primary">pytR</name>
    <name type="ORF">ATEG_00919</name>
</gene>
<evidence type="ECO:0000255" key="1">
    <source>
        <dbReference type="PROSITE-ProRule" id="PRU00227"/>
    </source>
</evidence>
<evidence type="ECO:0000256" key="2">
    <source>
        <dbReference type="SAM" id="MobiDB-lite"/>
    </source>
</evidence>
<evidence type="ECO:0000269" key="3">
    <source>
    </source>
</evidence>
<evidence type="ECO:0000303" key="4">
    <source>
    </source>
</evidence>
<comment type="function">
    <text evidence="3">Transcription factor that regulates the expression of the gene cluster that mediates the biosynthesis of Pyranterreones, a family of antioxidative compounds.</text>
</comment>
<comment type="subcellular location">
    <subcellularLocation>
        <location evidence="1">Nucleus</location>
    </subcellularLocation>
</comment>
<comment type="disruption phenotype">
    <text evidence="3">Loses the ability to produce pyranterreones.</text>
</comment>
<sequence>MAHFSRVASDPSLAPQPSAPSGLDSSTTSSSSTGLHRSCTFCRARKIRCSSGPICSACRERNINCIYSPEARKGRPRRRGTNTSNAQAKKGDQENPTLGRELDRMFQEYFISKTGSRSNLFQNSIASFHRHIRKPTPAHTPAPTPRPKLSYDSLLSFLAHEMVEVLLLRFGAFGDEQLQSNPHQYFYITSLADETTPSMFDPPRRQKSPLAALGKHRVVQMVHFWFFMHPLSAVVSKTLLLSAIQDETVDTALLAIILADAFESFDPKDNPNTTGSVRPEESPQELLQFAASQLQHRPCSNVDAGPISTAQALILLGWREMSQGNARRATCYIGYTCRVVAREHQRRSRDEGDRERMKLNGTDIGEVEQEILRNIYWLCLSTTTWAFMQIDQPFTLLVPDEIPDFPSLDETTSAVLCLDRASNNISTLPSQVQAMRWLWPLSHVTSTVAHIYTLYLNAPTEESKVHAAPWHTRHIYQLHRLLRSRFHPSNLSLEIHGILIQAIQLVEREVTIPSTKSFLLTSYYTIIVHILFSPERRAPTPITPAIIQALGECISAILTIAARVPSLPTSQVPAQSSYATRTLAVSLDSCSHALVRLHSQYDWQLKEHRDAAPALTKLADYADQAHQVCRSDFLGNYASVLRPAKKRLKWVKSALRALCMSPSSQPVSMSEVTDAANAAFPSLSPKKTPFSLDRPGDLSLGSSACSIHDFIPQSPGFPPSQLVPPLEIPDPGFFSDNASFESLLGFPGMARSDIYSRTSNSPSSHLTMGTLDGQAFGNLFLMSPDISAPDVDSMLQSNPFDTSNPVSNSGAERVCGTGAGLLGRSTGAQYDSHLHMDASKPFPAWNPGIAEEYGKYGE</sequence>
<accession>Q0CZG5</accession>
<dbReference type="EMBL" id="CH476594">
    <property type="protein sequence ID" value="EAU39565.1"/>
    <property type="molecule type" value="Genomic_DNA"/>
</dbReference>
<dbReference type="RefSeq" id="XP_001211005.1">
    <property type="nucleotide sequence ID" value="XM_001211005.1"/>
</dbReference>
<dbReference type="SMR" id="Q0CZG5"/>
<dbReference type="STRING" id="341663.Q0CZG5"/>
<dbReference type="EnsemblFungi" id="EAU39565">
    <property type="protein sequence ID" value="EAU39565"/>
    <property type="gene ID" value="ATEG_00919"/>
</dbReference>
<dbReference type="GeneID" id="4355682"/>
<dbReference type="VEuPathDB" id="FungiDB:ATEG_00919"/>
<dbReference type="eggNOG" id="ENOG502QVBS">
    <property type="taxonomic scope" value="Eukaryota"/>
</dbReference>
<dbReference type="HOGENOM" id="CLU_333151_0_0_1"/>
<dbReference type="OMA" id="REDTCDE"/>
<dbReference type="OrthoDB" id="5069333at2759"/>
<dbReference type="Proteomes" id="UP000007963">
    <property type="component" value="Unassembled WGS sequence"/>
</dbReference>
<dbReference type="GO" id="GO:0005634">
    <property type="term" value="C:nucleus"/>
    <property type="evidence" value="ECO:0007669"/>
    <property type="project" value="UniProtKB-SubCell"/>
</dbReference>
<dbReference type="GO" id="GO:0003677">
    <property type="term" value="F:DNA binding"/>
    <property type="evidence" value="ECO:0007669"/>
    <property type="project" value="UniProtKB-KW"/>
</dbReference>
<dbReference type="GO" id="GO:0000981">
    <property type="term" value="F:DNA-binding transcription factor activity, RNA polymerase II-specific"/>
    <property type="evidence" value="ECO:0007669"/>
    <property type="project" value="InterPro"/>
</dbReference>
<dbReference type="GO" id="GO:0008270">
    <property type="term" value="F:zinc ion binding"/>
    <property type="evidence" value="ECO:0007669"/>
    <property type="project" value="InterPro"/>
</dbReference>
<dbReference type="GO" id="GO:0006351">
    <property type="term" value="P:DNA-templated transcription"/>
    <property type="evidence" value="ECO:0007669"/>
    <property type="project" value="InterPro"/>
</dbReference>
<dbReference type="GO" id="GO:0009893">
    <property type="term" value="P:positive regulation of metabolic process"/>
    <property type="evidence" value="ECO:0007669"/>
    <property type="project" value="UniProtKB-ARBA"/>
</dbReference>
<dbReference type="CDD" id="cd12148">
    <property type="entry name" value="fungal_TF_MHR"/>
    <property type="match status" value="1"/>
</dbReference>
<dbReference type="CDD" id="cd00067">
    <property type="entry name" value="GAL4"/>
    <property type="match status" value="1"/>
</dbReference>
<dbReference type="Gene3D" id="4.10.240.10">
    <property type="entry name" value="Zn(2)-C6 fungal-type DNA-binding domain"/>
    <property type="match status" value="1"/>
</dbReference>
<dbReference type="InterPro" id="IPR050815">
    <property type="entry name" value="TF_fung"/>
</dbReference>
<dbReference type="InterPro" id="IPR007219">
    <property type="entry name" value="Transcription_factor_dom_fun"/>
</dbReference>
<dbReference type="InterPro" id="IPR036864">
    <property type="entry name" value="Zn2-C6_fun-type_DNA-bd_sf"/>
</dbReference>
<dbReference type="InterPro" id="IPR001138">
    <property type="entry name" value="Zn2Cys6_DnaBD"/>
</dbReference>
<dbReference type="PANTHER" id="PTHR47338:SF5">
    <property type="entry name" value="ZN(II)2CYS6 TRANSCRIPTION FACTOR (EUROFUNG)"/>
    <property type="match status" value="1"/>
</dbReference>
<dbReference type="PANTHER" id="PTHR47338">
    <property type="entry name" value="ZN(II)2CYS6 TRANSCRIPTION FACTOR (EUROFUNG)-RELATED"/>
    <property type="match status" value="1"/>
</dbReference>
<dbReference type="Pfam" id="PF04082">
    <property type="entry name" value="Fungal_trans"/>
    <property type="match status" value="1"/>
</dbReference>
<dbReference type="Pfam" id="PF00172">
    <property type="entry name" value="Zn_clus"/>
    <property type="match status" value="1"/>
</dbReference>
<dbReference type="SMART" id="SM00066">
    <property type="entry name" value="GAL4"/>
    <property type="match status" value="1"/>
</dbReference>
<dbReference type="SUPFAM" id="SSF57701">
    <property type="entry name" value="Zn2/Cys6 DNA-binding domain"/>
    <property type="match status" value="1"/>
</dbReference>
<dbReference type="PROSITE" id="PS00463">
    <property type="entry name" value="ZN2_CY6_FUNGAL_1"/>
    <property type="match status" value="1"/>
</dbReference>
<dbReference type="PROSITE" id="PS50048">
    <property type="entry name" value="ZN2_CY6_FUNGAL_2"/>
    <property type="match status" value="1"/>
</dbReference>
<protein>
    <recommendedName>
        <fullName evidence="4">Transcription factor pytR</fullName>
    </recommendedName>
    <alternativeName>
        <fullName evidence="4">Pyranterreones biosynthesis cluster protein R</fullName>
    </alternativeName>
</protein>
<reference key="1">
    <citation type="submission" date="2005-09" db="EMBL/GenBank/DDBJ databases">
        <title>Annotation of the Aspergillus terreus NIH2624 genome.</title>
        <authorList>
            <person name="Birren B.W."/>
            <person name="Lander E.S."/>
            <person name="Galagan J.E."/>
            <person name="Nusbaum C."/>
            <person name="Devon K."/>
            <person name="Henn M."/>
            <person name="Ma L.-J."/>
            <person name="Jaffe D.B."/>
            <person name="Butler J."/>
            <person name="Alvarez P."/>
            <person name="Gnerre S."/>
            <person name="Grabherr M."/>
            <person name="Kleber M."/>
            <person name="Mauceli E.W."/>
            <person name="Brockman W."/>
            <person name="Rounsley S."/>
            <person name="Young S.K."/>
            <person name="LaButti K."/>
            <person name="Pushparaj V."/>
            <person name="DeCaprio D."/>
            <person name="Crawford M."/>
            <person name="Koehrsen M."/>
            <person name="Engels R."/>
            <person name="Montgomery P."/>
            <person name="Pearson M."/>
            <person name="Howarth C."/>
            <person name="Larson L."/>
            <person name="Luoma S."/>
            <person name="White J."/>
            <person name="Alvarado L."/>
            <person name="Kodira C.D."/>
            <person name="Zeng Q."/>
            <person name="Oleary S."/>
            <person name="Yandava C."/>
            <person name="Denning D.W."/>
            <person name="Nierman W.C."/>
            <person name="Milne T."/>
            <person name="Madden K."/>
        </authorList>
    </citation>
    <scope>NUCLEOTIDE SEQUENCE [LARGE SCALE GENOMIC DNA]</scope>
    <source>
        <strain>NIH 2624 / FGSC A1156</strain>
    </source>
</reference>
<reference key="2">
    <citation type="journal article" date="2020" name="J. Nat. Prod.">
        <title>Discovery and characterization of a PKS-NRPS hybrid in Aspergillus terreus by genome mining.</title>
        <authorList>
            <person name="Tang S."/>
            <person name="Zhang W."/>
            <person name="Li Z."/>
            <person name="Li H."/>
            <person name="Geng C."/>
            <person name="Huang X."/>
            <person name="Lu X."/>
        </authorList>
    </citation>
    <scope>FUNCTION</scope>
    <scope>DISRUPTION PHENOTYPE</scope>
</reference>
<name>PYTR_ASPTN</name>
<keyword id="KW-0238">DNA-binding</keyword>
<keyword id="KW-0479">Metal-binding</keyword>
<keyword id="KW-0539">Nucleus</keyword>
<keyword id="KW-1185">Reference proteome</keyword>
<keyword id="KW-0804">Transcription</keyword>
<keyword id="KW-0805">Transcription regulation</keyword>
<keyword id="KW-0862">Zinc</keyword>
<organism>
    <name type="scientific">Aspergillus terreus (strain NIH 2624 / FGSC A1156)</name>
    <dbReference type="NCBI Taxonomy" id="341663"/>
    <lineage>
        <taxon>Eukaryota</taxon>
        <taxon>Fungi</taxon>
        <taxon>Dikarya</taxon>
        <taxon>Ascomycota</taxon>
        <taxon>Pezizomycotina</taxon>
        <taxon>Eurotiomycetes</taxon>
        <taxon>Eurotiomycetidae</taxon>
        <taxon>Eurotiales</taxon>
        <taxon>Aspergillaceae</taxon>
        <taxon>Aspergillus</taxon>
        <taxon>Aspergillus subgen. Circumdati</taxon>
    </lineage>
</organism>
<proteinExistence type="inferred from homology"/>
<feature type="chain" id="PRO_0000450474" description="Transcription factor pytR">
    <location>
        <begin position="1"/>
        <end position="858"/>
    </location>
</feature>
<feature type="DNA-binding region" description="Zn(2)-C6 fungal-type" evidence="1">
    <location>
        <begin position="39"/>
        <end position="65"/>
    </location>
</feature>
<feature type="region of interest" description="Disordered" evidence="2">
    <location>
        <begin position="1"/>
        <end position="35"/>
    </location>
</feature>
<feature type="region of interest" description="Disordered" evidence="2">
    <location>
        <begin position="72"/>
        <end position="99"/>
    </location>
</feature>